<organism>
    <name type="scientific">Herminiimonas arsenicoxydans</name>
    <dbReference type="NCBI Taxonomy" id="204773"/>
    <lineage>
        <taxon>Bacteria</taxon>
        <taxon>Pseudomonadati</taxon>
        <taxon>Pseudomonadota</taxon>
        <taxon>Betaproteobacteria</taxon>
        <taxon>Burkholderiales</taxon>
        <taxon>Oxalobacteraceae</taxon>
        <taxon>Herminiimonas</taxon>
    </lineage>
</organism>
<protein>
    <recommendedName>
        <fullName evidence="1">Recombination protein RecR</fullName>
    </recommendedName>
</protein>
<gene>
    <name evidence="1" type="primary">recR</name>
    <name type="ordered locus">HEAR1047</name>
</gene>
<keyword id="KW-0227">DNA damage</keyword>
<keyword id="KW-0233">DNA recombination</keyword>
<keyword id="KW-0234">DNA repair</keyword>
<keyword id="KW-0479">Metal-binding</keyword>
<keyword id="KW-1185">Reference proteome</keyword>
<keyword id="KW-0862">Zinc</keyword>
<keyword id="KW-0863">Zinc-finger</keyword>
<name>RECR_HERAR</name>
<dbReference type="EMBL" id="CU207211">
    <property type="protein sequence ID" value="CAL61227.2"/>
    <property type="molecule type" value="Genomic_DNA"/>
</dbReference>
<dbReference type="SMR" id="A4G3Z0"/>
<dbReference type="STRING" id="204773.HEAR1047"/>
<dbReference type="KEGG" id="har:HEAR1047"/>
<dbReference type="eggNOG" id="COG0353">
    <property type="taxonomic scope" value="Bacteria"/>
</dbReference>
<dbReference type="HOGENOM" id="CLU_060739_1_2_4"/>
<dbReference type="OrthoDB" id="9802672at2"/>
<dbReference type="Proteomes" id="UP000006697">
    <property type="component" value="Chromosome"/>
</dbReference>
<dbReference type="GO" id="GO:0003677">
    <property type="term" value="F:DNA binding"/>
    <property type="evidence" value="ECO:0007669"/>
    <property type="project" value="UniProtKB-UniRule"/>
</dbReference>
<dbReference type="GO" id="GO:0008270">
    <property type="term" value="F:zinc ion binding"/>
    <property type="evidence" value="ECO:0007669"/>
    <property type="project" value="UniProtKB-KW"/>
</dbReference>
<dbReference type="GO" id="GO:0006310">
    <property type="term" value="P:DNA recombination"/>
    <property type="evidence" value="ECO:0007669"/>
    <property type="project" value="UniProtKB-UniRule"/>
</dbReference>
<dbReference type="GO" id="GO:0006281">
    <property type="term" value="P:DNA repair"/>
    <property type="evidence" value="ECO:0007669"/>
    <property type="project" value="UniProtKB-UniRule"/>
</dbReference>
<dbReference type="CDD" id="cd01025">
    <property type="entry name" value="TOPRIM_recR"/>
    <property type="match status" value="1"/>
</dbReference>
<dbReference type="Gene3D" id="3.40.1360.10">
    <property type="match status" value="1"/>
</dbReference>
<dbReference type="Gene3D" id="6.10.250.240">
    <property type="match status" value="1"/>
</dbReference>
<dbReference type="Gene3D" id="1.10.8.420">
    <property type="entry name" value="RecR Domain 1"/>
    <property type="match status" value="1"/>
</dbReference>
<dbReference type="HAMAP" id="MF_00017">
    <property type="entry name" value="RecR"/>
    <property type="match status" value="1"/>
</dbReference>
<dbReference type="InterPro" id="IPR000093">
    <property type="entry name" value="DNA_Rcmb_RecR"/>
</dbReference>
<dbReference type="InterPro" id="IPR023627">
    <property type="entry name" value="Rcmb_RecR"/>
</dbReference>
<dbReference type="InterPro" id="IPR015967">
    <property type="entry name" value="Rcmb_RecR_Znf"/>
</dbReference>
<dbReference type="InterPro" id="IPR006171">
    <property type="entry name" value="TOPRIM_dom"/>
</dbReference>
<dbReference type="InterPro" id="IPR034137">
    <property type="entry name" value="TOPRIM_RecR"/>
</dbReference>
<dbReference type="NCBIfam" id="TIGR00615">
    <property type="entry name" value="recR"/>
    <property type="match status" value="1"/>
</dbReference>
<dbReference type="PANTHER" id="PTHR30446">
    <property type="entry name" value="RECOMBINATION PROTEIN RECR"/>
    <property type="match status" value="1"/>
</dbReference>
<dbReference type="PANTHER" id="PTHR30446:SF0">
    <property type="entry name" value="RECOMBINATION PROTEIN RECR"/>
    <property type="match status" value="1"/>
</dbReference>
<dbReference type="Pfam" id="PF21175">
    <property type="entry name" value="RecR_C"/>
    <property type="match status" value="1"/>
</dbReference>
<dbReference type="Pfam" id="PF21176">
    <property type="entry name" value="RecR_HhH"/>
    <property type="match status" value="1"/>
</dbReference>
<dbReference type="Pfam" id="PF02132">
    <property type="entry name" value="RecR_ZnF"/>
    <property type="match status" value="1"/>
</dbReference>
<dbReference type="Pfam" id="PF13662">
    <property type="entry name" value="Toprim_4"/>
    <property type="match status" value="1"/>
</dbReference>
<dbReference type="SMART" id="SM00493">
    <property type="entry name" value="TOPRIM"/>
    <property type="match status" value="1"/>
</dbReference>
<dbReference type="SUPFAM" id="SSF111304">
    <property type="entry name" value="Recombination protein RecR"/>
    <property type="match status" value="1"/>
</dbReference>
<dbReference type="PROSITE" id="PS50880">
    <property type="entry name" value="TOPRIM"/>
    <property type="match status" value="1"/>
</dbReference>
<evidence type="ECO:0000255" key="1">
    <source>
        <dbReference type="HAMAP-Rule" id="MF_00017"/>
    </source>
</evidence>
<comment type="function">
    <text evidence="1">May play a role in DNA repair. It seems to be involved in an RecBC-independent recombinational process of DNA repair. It may act with RecF and RecO.</text>
</comment>
<comment type="similarity">
    <text evidence="1">Belongs to the RecR family.</text>
</comment>
<feature type="chain" id="PRO_1000089738" description="Recombination protein RecR">
    <location>
        <begin position="1"/>
        <end position="198"/>
    </location>
</feature>
<feature type="domain" description="Toprim" evidence="1">
    <location>
        <begin position="80"/>
        <end position="175"/>
    </location>
</feature>
<feature type="zinc finger region" description="C4-type" evidence="1">
    <location>
        <begin position="57"/>
        <end position="72"/>
    </location>
</feature>
<reference key="1">
    <citation type="journal article" date="2007" name="PLoS Genet.">
        <title>A tale of two oxidation states: bacterial colonization of arsenic-rich environments.</title>
        <authorList>
            <person name="Muller D."/>
            <person name="Medigue C."/>
            <person name="Koechler S."/>
            <person name="Barbe V."/>
            <person name="Barakat M."/>
            <person name="Talla E."/>
            <person name="Bonnefoy V."/>
            <person name="Krin E."/>
            <person name="Arsene-Ploetze F."/>
            <person name="Carapito C."/>
            <person name="Chandler M."/>
            <person name="Cournoyer B."/>
            <person name="Cruveiller S."/>
            <person name="Dossat C."/>
            <person name="Duval S."/>
            <person name="Heymann M."/>
            <person name="Leize E."/>
            <person name="Lieutaud A."/>
            <person name="Lievremont D."/>
            <person name="Makita Y."/>
            <person name="Mangenot S."/>
            <person name="Nitschke W."/>
            <person name="Ortet P."/>
            <person name="Perdrial N."/>
            <person name="Schoepp B."/>
            <person name="Siguier P."/>
            <person name="Simeonova D.D."/>
            <person name="Rouy Z."/>
            <person name="Segurens B."/>
            <person name="Turlin E."/>
            <person name="Vallenet D."/>
            <person name="van Dorsselaer A."/>
            <person name="Weiss S."/>
            <person name="Weissenbach J."/>
            <person name="Lett M.-C."/>
            <person name="Danchin A."/>
            <person name="Bertin P.N."/>
        </authorList>
    </citation>
    <scope>NUCLEOTIDE SEQUENCE [LARGE SCALE GENOMIC DNA]</scope>
    <source>
        <strain>ULPAs1</strain>
    </source>
</reference>
<proteinExistence type="inferred from homology"/>
<accession>A4G3Z0</accession>
<sequence>MKSPSSLAFLTEALRRLPGVGPKSAQRMAYHLMQHDRDGAAMLGRALSQAVERVQHCAMCNTFTESAVCETCLDAERNAALLCVVETPGDQLMIEQTLTFKGLYFVLMGRLSPLDGIGPKDIHLEKLISRATDGIVQEVVLATNFTNEGEATAHYISETLKARGLKVSRLARGVPVGGELEYVDAGTIARAMLDRRTT</sequence>